<dbReference type="EC" id="2.7.7.23" evidence="1"/>
<dbReference type="EC" id="2.3.1.157" evidence="1"/>
<dbReference type="EMBL" id="AE008922">
    <property type="protein sequence ID" value="AAM39874.1"/>
    <property type="molecule type" value="Genomic_DNA"/>
</dbReference>
<dbReference type="RefSeq" id="NP_635950.1">
    <property type="nucleotide sequence ID" value="NC_003902.1"/>
</dbReference>
<dbReference type="RefSeq" id="WP_011035805.1">
    <property type="nucleotide sequence ID" value="NC_003902.1"/>
</dbReference>
<dbReference type="SMR" id="Q8PCZ1"/>
<dbReference type="STRING" id="190485.XCC0558"/>
<dbReference type="EnsemblBacteria" id="AAM39874">
    <property type="protein sequence ID" value="AAM39874"/>
    <property type="gene ID" value="XCC0558"/>
</dbReference>
<dbReference type="KEGG" id="xcc:XCC0558"/>
<dbReference type="PATRIC" id="fig|190485.4.peg.615"/>
<dbReference type="eggNOG" id="COG1207">
    <property type="taxonomic scope" value="Bacteria"/>
</dbReference>
<dbReference type="HOGENOM" id="CLU_029499_15_2_6"/>
<dbReference type="OrthoDB" id="9775031at2"/>
<dbReference type="UniPathway" id="UPA00113">
    <property type="reaction ID" value="UER00532"/>
</dbReference>
<dbReference type="UniPathway" id="UPA00113">
    <property type="reaction ID" value="UER00533"/>
</dbReference>
<dbReference type="UniPathway" id="UPA00973"/>
<dbReference type="Proteomes" id="UP000001010">
    <property type="component" value="Chromosome"/>
</dbReference>
<dbReference type="GO" id="GO:0005737">
    <property type="term" value="C:cytoplasm"/>
    <property type="evidence" value="ECO:0007669"/>
    <property type="project" value="UniProtKB-SubCell"/>
</dbReference>
<dbReference type="GO" id="GO:0016020">
    <property type="term" value="C:membrane"/>
    <property type="evidence" value="ECO:0007669"/>
    <property type="project" value="GOC"/>
</dbReference>
<dbReference type="GO" id="GO:0019134">
    <property type="term" value="F:glucosamine-1-phosphate N-acetyltransferase activity"/>
    <property type="evidence" value="ECO:0007669"/>
    <property type="project" value="UniProtKB-UniRule"/>
</dbReference>
<dbReference type="GO" id="GO:0000287">
    <property type="term" value="F:magnesium ion binding"/>
    <property type="evidence" value="ECO:0007669"/>
    <property type="project" value="UniProtKB-UniRule"/>
</dbReference>
<dbReference type="GO" id="GO:0003977">
    <property type="term" value="F:UDP-N-acetylglucosamine diphosphorylase activity"/>
    <property type="evidence" value="ECO:0007669"/>
    <property type="project" value="UniProtKB-UniRule"/>
</dbReference>
<dbReference type="GO" id="GO:0000902">
    <property type="term" value="P:cell morphogenesis"/>
    <property type="evidence" value="ECO:0007669"/>
    <property type="project" value="UniProtKB-UniRule"/>
</dbReference>
<dbReference type="GO" id="GO:0071555">
    <property type="term" value="P:cell wall organization"/>
    <property type="evidence" value="ECO:0007669"/>
    <property type="project" value="UniProtKB-KW"/>
</dbReference>
<dbReference type="GO" id="GO:0009245">
    <property type="term" value="P:lipid A biosynthetic process"/>
    <property type="evidence" value="ECO:0007669"/>
    <property type="project" value="UniProtKB-UniRule"/>
</dbReference>
<dbReference type="GO" id="GO:0009252">
    <property type="term" value="P:peptidoglycan biosynthetic process"/>
    <property type="evidence" value="ECO:0007669"/>
    <property type="project" value="UniProtKB-UniRule"/>
</dbReference>
<dbReference type="GO" id="GO:0008360">
    <property type="term" value="P:regulation of cell shape"/>
    <property type="evidence" value="ECO:0007669"/>
    <property type="project" value="UniProtKB-KW"/>
</dbReference>
<dbReference type="GO" id="GO:0006048">
    <property type="term" value="P:UDP-N-acetylglucosamine biosynthetic process"/>
    <property type="evidence" value="ECO:0007669"/>
    <property type="project" value="UniProtKB-UniPathway"/>
</dbReference>
<dbReference type="CDD" id="cd02540">
    <property type="entry name" value="GT2_GlmU_N_bac"/>
    <property type="match status" value="1"/>
</dbReference>
<dbReference type="CDD" id="cd03353">
    <property type="entry name" value="LbH_GlmU_C"/>
    <property type="match status" value="1"/>
</dbReference>
<dbReference type="Gene3D" id="2.160.10.10">
    <property type="entry name" value="Hexapeptide repeat proteins"/>
    <property type="match status" value="1"/>
</dbReference>
<dbReference type="Gene3D" id="3.90.550.10">
    <property type="entry name" value="Spore Coat Polysaccharide Biosynthesis Protein SpsA, Chain A"/>
    <property type="match status" value="1"/>
</dbReference>
<dbReference type="HAMAP" id="MF_01631">
    <property type="entry name" value="GlmU"/>
    <property type="match status" value="1"/>
</dbReference>
<dbReference type="InterPro" id="IPR005882">
    <property type="entry name" value="Bifunctional_GlmU"/>
</dbReference>
<dbReference type="InterPro" id="IPR050065">
    <property type="entry name" value="GlmU-like"/>
</dbReference>
<dbReference type="InterPro" id="IPR038009">
    <property type="entry name" value="GlmU_C_LbH"/>
</dbReference>
<dbReference type="InterPro" id="IPR001451">
    <property type="entry name" value="Hexapep"/>
</dbReference>
<dbReference type="InterPro" id="IPR018357">
    <property type="entry name" value="Hexapep_transf_CS"/>
</dbReference>
<dbReference type="InterPro" id="IPR025877">
    <property type="entry name" value="MobA-like_NTP_Trfase"/>
</dbReference>
<dbReference type="InterPro" id="IPR029044">
    <property type="entry name" value="Nucleotide-diphossugar_trans"/>
</dbReference>
<dbReference type="InterPro" id="IPR011004">
    <property type="entry name" value="Trimer_LpxA-like_sf"/>
</dbReference>
<dbReference type="NCBIfam" id="TIGR01173">
    <property type="entry name" value="glmU"/>
    <property type="match status" value="1"/>
</dbReference>
<dbReference type="PANTHER" id="PTHR43584:SF3">
    <property type="entry name" value="BIFUNCTIONAL PROTEIN GLMU"/>
    <property type="match status" value="1"/>
</dbReference>
<dbReference type="PANTHER" id="PTHR43584">
    <property type="entry name" value="NUCLEOTIDYL TRANSFERASE"/>
    <property type="match status" value="1"/>
</dbReference>
<dbReference type="Pfam" id="PF00132">
    <property type="entry name" value="Hexapep"/>
    <property type="match status" value="1"/>
</dbReference>
<dbReference type="Pfam" id="PF12804">
    <property type="entry name" value="NTP_transf_3"/>
    <property type="match status" value="1"/>
</dbReference>
<dbReference type="SUPFAM" id="SSF53448">
    <property type="entry name" value="Nucleotide-diphospho-sugar transferases"/>
    <property type="match status" value="1"/>
</dbReference>
<dbReference type="SUPFAM" id="SSF51161">
    <property type="entry name" value="Trimeric LpxA-like enzymes"/>
    <property type="match status" value="1"/>
</dbReference>
<dbReference type="PROSITE" id="PS00101">
    <property type="entry name" value="HEXAPEP_TRANSFERASES"/>
    <property type="match status" value="1"/>
</dbReference>
<name>GLMU_XANCP</name>
<keyword id="KW-0012">Acyltransferase</keyword>
<keyword id="KW-0133">Cell shape</keyword>
<keyword id="KW-0961">Cell wall biogenesis/degradation</keyword>
<keyword id="KW-0963">Cytoplasm</keyword>
<keyword id="KW-0460">Magnesium</keyword>
<keyword id="KW-0479">Metal-binding</keyword>
<keyword id="KW-0511">Multifunctional enzyme</keyword>
<keyword id="KW-0548">Nucleotidyltransferase</keyword>
<keyword id="KW-0573">Peptidoglycan synthesis</keyword>
<keyword id="KW-1185">Reference proteome</keyword>
<keyword id="KW-0677">Repeat</keyword>
<keyword id="KW-0808">Transferase</keyword>
<gene>
    <name evidence="1" type="primary">glmU</name>
    <name type="ordered locus">XCC0558</name>
</gene>
<proteinExistence type="inferred from homology"/>
<protein>
    <recommendedName>
        <fullName evidence="1">Bifunctional protein GlmU</fullName>
    </recommendedName>
    <domain>
        <recommendedName>
            <fullName evidence="1">UDP-N-acetylglucosamine pyrophosphorylase</fullName>
            <ecNumber evidence="1">2.7.7.23</ecNumber>
        </recommendedName>
        <alternativeName>
            <fullName evidence="1">N-acetylglucosamine-1-phosphate uridyltransferase</fullName>
        </alternativeName>
    </domain>
    <domain>
        <recommendedName>
            <fullName evidence="1">Glucosamine-1-phosphate N-acetyltransferase</fullName>
            <ecNumber evidence="1">2.3.1.157</ecNumber>
        </recommendedName>
    </domain>
</protein>
<feature type="chain" id="PRO_0000233882" description="Bifunctional protein GlmU">
    <location>
        <begin position="1"/>
        <end position="454"/>
    </location>
</feature>
<feature type="region of interest" description="Pyrophosphorylase" evidence="1">
    <location>
        <begin position="1"/>
        <end position="228"/>
    </location>
</feature>
<feature type="region of interest" description="Linker" evidence="1">
    <location>
        <begin position="229"/>
        <end position="249"/>
    </location>
</feature>
<feature type="region of interest" description="N-acetyltransferase" evidence="1">
    <location>
        <begin position="250"/>
        <end position="454"/>
    </location>
</feature>
<feature type="active site" description="Proton acceptor" evidence="1">
    <location>
        <position position="362"/>
    </location>
</feature>
<feature type="binding site" evidence="1">
    <location>
        <begin position="10"/>
        <end position="13"/>
    </location>
    <ligand>
        <name>UDP-N-acetyl-alpha-D-glucosamine</name>
        <dbReference type="ChEBI" id="CHEBI:57705"/>
    </ligand>
</feature>
<feature type="binding site" evidence="1">
    <location>
        <position position="24"/>
    </location>
    <ligand>
        <name>UDP-N-acetyl-alpha-D-glucosamine</name>
        <dbReference type="ChEBI" id="CHEBI:57705"/>
    </ligand>
</feature>
<feature type="binding site" evidence="1">
    <location>
        <position position="76"/>
    </location>
    <ligand>
        <name>UDP-N-acetyl-alpha-D-glucosamine</name>
        <dbReference type="ChEBI" id="CHEBI:57705"/>
    </ligand>
</feature>
<feature type="binding site" evidence="1">
    <location>
        <begin position="81"/>
        <end position="82"/>
    </location>
    <ligand>
        <name>UDP-N-acetyl-alpha-D-glucosamine</name>
        <dbReference type="ChEBI" id="CHEBI:57705"/>
    </ligand>
</feature>
<feature type="binding site" evidence="1">
    <location>
        <begin position="103"/>
        <end position="105"/>
    </location>
    <ligand>
        <name>UDP-N-acetyl-alpha-D-glucosamine</name>
        <dbReference type="ChEBI" id="CHEBI:57705"/>
    </ligand>
</feature>
<feature type="binding site" evidence="1">
    <location>
        <position position="105"/>
    </location>
    <ligand>
        <name>Mg(2+)</name>
        <dbReference type="ChEBI" id="CHEBI:18420"/>
    </ligand>
</feature>
<feature type="binding site" evidence="1">
    <location>
        <position position="138"/>
    </location>
    <ligand>
        <name>UDP-N-acetyl-alpha-D-glucosamine</name>
        <dbReference type="ChEBI" id="CHEBI:57705"/>
    </ligand>
</feature>
<feature type="binding site" evidence="1">
    <location>
        <position position="153"/>
    </location>
    <ligand>
        <name>UDP-N-acetyl-alpha-D-glucosamine</name>
        <dbReference type="ChEBI" id="CHEBI:57705"/>
    </ligand>
</feature>
<feature type="binding site" evidence="1">
    <location>
        <position position="168"/>
    </location>
    <ligand>
        <name>UDP-N-acetyl-alpha-D-glucosamine</name>
        <dbReference type="ChEBI" id="CHEBI:57705"/>
    </ligand>
</feature>
<feature type="binding site" evidence="1">
    <location>
        <position position="226"/>
    </location>
    <ligand>
        <name>Mg(2+)</name>
        <dbReference type="ChEBI" id="CHEBI:18420"/>
    </ligand>
</feature>
<feature type="binding site" evidence="1">
    <location>
        <position position="226"/>
    </location>
    <ligand>
        <name>UDP-N-acetyl-alpha-D-glucosamine</name>
        <dbReference type="ChEBI" id="CHEBI:57705"/>
    </ligand>
</feature>
<feature type="binding site" evidence="1">
    <location>
        <position position="332"/>
    </location>
    <ligand>
        <name>UDP-N-acetyl-alpha-D-glucosamine</name>
        <dbReference type="ChEBI" id="CHEBI:57705"/>
    </ligand>
</feature>
<feature type="binding site" evidence="1">
    <location>
        <position position="350"/>
    </location>
    <ligand>
        <name>UDP-N-acetyl-alpha-D-glucosamine</name>
        <dbReference type="ChEBI" id="CHEBI:57705"/>
    </ligand>
</feature>
<feature type="binding site" evidence="1">
    <location>
        <position position="365"/>
    </location>
    <ligand>
        <name>UDP-N-acetyl-alpha-D-glucosamine</name>
        <dbReference type="ChEBI" id="CHEBI:57705"/>
    </ligand>
</feature>
<feature type="binding site" evidence="1">
    <location>
        <position position="376"/>
    </location>
    <ligand>
        <name>UDP-N-acetyl-alpha-D-glucosamine</name>
        <dbReference type="ChEBI" id="CHEBI:57705"/>
    </ligand>
</feature>
<feature type="binding site" evidence="1">
    <location>
        <position position="379"/>
    </location>
    <ligand>
        <name>acetyl-CoA</name>
        <dbReference type="ChEBI" id="CHEBI:57288"/>
    </ligand>
</feature>
<feature type="binding site" evidence="1">
    <location>
        <begin position="385"/>
        <end position="386"/>
    </location>
    <ligand>
        <name>acetyl-CoA</name>
        <dbReference type="ChEBI" id="CHEBI:57288"/>
    </ligand>
</feature>
<feature type="binding site" evidence="1">
    <location>
        <position position="404"/>
    </location>
    <ligand>
        <name>acetyl-CoA</name>
        <dbReference type="ChEBI" id="CHEBI:57288"/>
    </ligand>
</feature>
<feature type="binding site" evidence="1">
    <location>
        <position position="422"/>
    </location>
    <ligand>
        <name>acetyl-CoA</name>
        <dbReference type="ChEBI" id="CHEBI:57288"/>
    </ligand>
</feature>
<feature type="binding site" evidence="1">
    <location>
        <position position="439"/>
    </location>
    <ligand>
        <name>acetyl-CoA</name>
        <dbReference type="ChEBI" id="CHEBI:57288"/>
    </ligand>
</feature>
<accession>Q8PCZ1</accession>
<evidence type="ECO:0000255" key="1">
    <source>
        <dbReference type="HAMAP-Rule" id="MF_01631"/>
    </source>
</evidence>
<sequence length="454" mass="48076">MTLPLHVVILAAGEGKRMRSALPKVLQPLAGQPMLAHVIATARELQPAAIHVVHGHGGAQVQAAFAGQPDLQWAEQRQQLGTGHAVQQALHAVPDAATVLVLYGDVPLIRSESLRELLHAPGRIAVLVADLANPSGYGRIVRNPEGKVAAIVEQKDADDEQRRIRTINTGILTAESTALRRWLGGLSNDNAQGEFYLTDVFASAAADYTPADMVQVSDPQDVEGANDPWQLAQLERAWQLRAARALCLQGVRMADPARVEQRGRVQVGHDVQLDIDVILEGEVTLGDGVVIGPFVRLRDVQLAAGTQVRAHCDLEGVVTEGAVQIGPFARLRPGTVLADGVHIGNFVETKKVVMGAGSKANHLTYLGDAVVGSKVNIGAGTITCNYDGVNKSQTTIGDGAFVGSNSALVAPIEIGTGATIGAGSVITRDAPPHQLSVARPRQTVIEGWERPKKK</sequence>
<comment type="function">
    <text evidence="1">Catalyzes the last two sequential reactions in the de novo biosynthetic pathway for UDP-N-acetylglucosamine (UDP-GlcNAc). The C-terminal domain catalyzes the transfer of acetyl group from acetyl coenzyme A to glucosamine-1-phosphate (GlcN-1-P) to produce N-acetylglucosamine-1-phosphate (GlcNAc-1-P), which is converted into UDP-GlcNAc by the transfer of uridine 5-monophosphate (from uridine 5-triphosphate), a reaction catalyzed by the N-terminal domain.</text>
</comment>
<comment type="catalytic activity">
    <reaction evidence="1">
        <text>alpha-D-glucosamine 1-phosphate + acetyl-CoA = N-acetyl-alpha-D-glucosamine 1-phosphate + CoA + H(+)</text>
        <dbReference type="Rhea" id="RHEA:13725"/>
        <dbReference type="ChEBI" id="CHEBI:15378"/>
        <dbReference type="ChEBI" id="CHEBI:57287"/>
        <dbReference type="ChEBI" id="CHEBI:57288"/>
        <dbReference type="ChEBI" id="CHEBI:57776"/>
        <dbReference type="ChEBI" id="CHEBI:58516"/>
        <dbReference type="EC" id="2.3.1.157"/>
    </reaction>
</comment>
<comment type="catalytic activity">
    <reaction evidence="1">
        <text>N-acetyl-alpha-D-glucosamine 1-phosphate + UTP + H(+) = UDP-N-acetyl-alpha-D-glucosamine + diphosphate</text>
        <dbReference type="Rhea" id="RHEA:13509"/>
        <dbReference type="ChEBI" id="CHEBI:15378"/>
        <dbReference type="ChEBI" id="CHEBI:33019"/>
        <dbReference type="ChEBI" id="CHEBI:46398"/>
        <dbReference type="ChEBI" id="CHEBI:57705"/>
        <dbReference type="ChEBI" id="CHEBI:57776"/>
        <dbReference type="EC" id="2.7.7.23"/>
    </reaction>
</comment>
<comment type="cofactor">
    <cofactor evidence="1">
        <name>Mg(2+)</name>
        <dbReference type="ChEBI" id="CHEBI:18420"/>
    </cofactor>
    <text evidence="1">Binds 1 Mg(2+) ion per subunit.</text>
</comment>
<comment type="pathway">
    <text evidence="1">Nucleotide-sugar biosynthesis; UDP-N-acetyl-alpha-D-glucosamine biosynthesis; N-acetyl-alpha-D-glucosamine 1-phosphate from alpha-D-glucosamine 6-phosphate (route II): step 2/2.</text>
</comment>
<comment type="pathway">
    <text evidence="1">Nucleotide-sugar biosynthesis; UDP-N-acetyl-alpha-D-glucosamine biosynthesis; UDP-N-acetyl-alpha-D-glucosamine from N-acetyl-alpha-D-glucosamine 1-phosphate: step 1/1.</text>
</comment>
<comment type="pathway">
    <text evidence="1">Bacterial outer membrane biogenesis; LPS lipid A biosynthesis.</text>
</comment>
<comment type="subunit">
    <text evidence="1">Homotrimer.</text>
</comment>
<comment type="subcellular location">
    <subcellularLocation>
        <location evidence="1">Cytoplasm</location>
    </subcellularLocation>
</comment>
<comment type="similarity">
    <text evidence="1">In the N-terminal section; belongs to the N-acetylglucosamine-1-phosphate uridyltransferase family.</text>
</comment>
<comment type="similarity">
    <text evidence="1">In the C-terminal section; belongs to the transferase hexapeptide repeat family.</text>
</comment>
<organism>
    <name type="scientific">Xanthomonas campestris pv. campestris (strain ATCC 33913 / DSM 3586 / NCPPB 528 / LMG 568 / P 25)</name>
    <dbReference type="NCBI Taxonomy" id="190485"/>
    <lineage>
        <taxon>Bacteria</taxon>
        <taxon>Pseudomonadati</taxon>
        <taxon>Pseudomonadota</taxon>
        <taxon>Gammaproteobacteria</taxon>
        <taxon>Lysobacterales</taxon>
        <taxon>Lysobacteraceae</taxon>
        <taxon>Xanthomonas</taxon>
    </lineage>
</organism>
<reference key="1">
    <citation type="journal article" date="2002" name="Nature">
        <title>Comparison of the genomes of two Xanthomonas pathogens with differing host specificities.</title>
        <authorList>
            <person name="da Silva A.C.R."/>
            <person name="Ferro J.A."/>
            <person name="Reinach F.C."/>
            <person name="Farah C.S."/>
            <person name="Furlan L.R."/>
            <person name="Quaggio R.B."/>
            <person name="Monteiro-Vitorello C.B."/>
            <person name="Van Sluys M.A."/>
            <person name="Almeida N.F. Jr."/>
            <person name="Alves L.M.C."/>
            <person name="do Amaral A.M."/>
            <person name="Bertolini M.C."/>
            <person name="Camargo L.E.A."/>
            <person name="Camarotte G."/>
            <person name="Cannavan F."/>
            <person name="Cardozo J."/>
            <person name="Chambergo F."/>
            <person name="Ciapina L.P."/>
            <person name="Cicarelli R.M.B."/>
            <person name="Coutinho L.L."/>
            <person name="Cursino-Santos J.R."/>
            <person name="El-Dorry H."/>
            <person name="Faria J.B."/>
            <person name="Ferreira A.J.S."/>
            <person name="Ferreira R.C.C."/>
            <person name="Ferro M.I.T."/>
            <person name="Formighieri E.F."/>
            <person name="Franco M.C."/>
            <person name="Greggio C.C."/>
            <person name="Gruber A."/>
            <person name="Katsuyama A.M."/>
            <person name="Kishi L.T."/>
            <person name="Leite R.P."/>
            <person name="Lemos E.G.M."/>
            <person name="Lemos M.V.F."/>
            <person name="Locali E.C."/>
            <person name="Machado M.A."/>
            <person name="Madeira A.M.B.N."/>
            <person name="Martinez-Rossi N.M."/>
            <person name="Martins E.C."/>
            <person name="Meidanis J."/>
            <person name="Menck C.F.M."/>
            <person name="Miyaki C.Y."/>
            <person name="Moon D.H."/>
            <person name="Moreira L.M."/>
            <person name="Novo M.T.M."/>
            <person name="Okura V.K."/>
            <person name="Oliveira M.C."/>
            <person name="Oliveira V.R."/>
            <person name="Pereira H.A."/>
            <person name="Rossi A."/>
            <person name="Sena J.A.D."/>
            <person name="Silva C."/>
            <person name="de Souza R.F."/>
            <person name="Spinola L.A.F."/>
            <person name="Takita M.A."/>
            <person name="Tamura R.E."/>
            <person name="Teixeira E.C."/>
            <person name="Tezza R.I.D."/>
            <person name="Trindade dos Santos M."/>
            <person name="Truffi D."/>
            <person name="Tsai S.M."/>
            <person name="White F.F."/>
            <person name="Setubal J.C."/>
            <person name="Kitajima J.P."/>
        </authorList>
    </citation>
    <scope>NUCLEOTIDE SEQUENCE [LARGE SCALE GENOMIC DNA]</scope>
    <source>
        <strain>ATCC 33913 / DSM 3586 / NCPPB 528 / LMG 568 / P 25</strain>
    </source>
</reference>